<gene>
    <name evidence="1" type="primary">tgt</name>
    <name type="ordered locus">str1806</name>
</gene>
<reference key="1">
    <citation type="journal article" date="2004" name="Nat. Biotechnol.">
        <title>Complete sequence and comparative genome analysis of the dairy bacterium Streptococcus thermophilus.</title>
        <authorList>
            <person name="Bolotin A."/>
            <person name="Quinquis B."/>
            <person name="Renault P."/>
            <person name="Sorokin A."/>
            <person name="Ehrlich S.D."/>
            <person name="Kulakauskas S."/>
            <person name="Lapidus A."/>
            <person name="Goltsman E."/>
            <person name="Mazur M."/>
            <person name="Pusch G.D."/>
            <person name="Fonstein M."/>
            <person name="Overbeek R."/>
            <person name="Kyprides N."/>
            <person name="Purnelle B."/>
            <person name="Prozzi D."/>
            <person name="Ngui K."/>
            <person name="Masuy D."/>
            <person name="Hancy F."/>
            <person name="Burteau S."/>
            <person name="Boutry M."/>
            <person name="Delcour J."/>
            <person name="Goffeau A."/>
            <person name="Hols P."/>
        </authorList>
    </citation>
    <scope>NUCLEOTIDE SEQUENCE [LARGE SCALE GENOMIC DNA]</scope>
    <source>
        <strain>CNRZ 1066</strain>
    </source>
</reference>
<accession>Q5LY05</accession>
<comment type="function">
    <text evidence="1">Catalyzes the base-exchange of a guanine (G) residue with the queuine precursor 7-aminomethyl-7-deazaguanine (PreQ1) at position 34 (anticodon wobble position) in tRNAs with GU(N) anticodons (tRNA-Asp, -Asn, -His and -Tyr). Catalysis occurs through a double-displacement mechanism. The nucleophile active site attacks the C1' of nucleotide 34 to detach the guanine base from the RNA, forming a covalent enzyme-RNA intermediate. The proton acceptor active site deprotonates the incoming PreQ1, allowing a nucleophilic attack on the C1' of the ribose to form the product. After dissociation, two additional enzymatic reactions on the tRNA convert PreQ1 to queuine (Q), resulting in the hypermodified nucleoside queuosine (7-(((4,5-cis-dihydroxy-2-cyclopenten-1-yl)amino)methyl)-7-deazaguanosine).</text>
</comment>
<comment type="catalytic activity">
    <reaction evidence="1">
        <text>7-aminomethyl-7-carbaguanine + guanosine(34) in tRNA = 7-aminomethyl-7-carbaguanosine(34) in tRNA + guanine</text>
        <dbReference type="Rhea" id="RHEA:24104"/>
        <dbReference type="Rhea" id="RHEA-COMP:10341"/>
        <dbReference type="Rhea" id="RHEA-COMP:10342"/>
        <dbReference type="ChEBI" id="CHEBI:16235"/>
        <dbReference type="ChEBI" id="CHEBI:58703"/>
        <dbReference type="ChEBI" id="CHEBI:74269"/>
        <dbReference type="ChEBI" id="CHEBI:82833"/>
        <dbReference type="EC" id="2.4.2.29"/>
    </reaction>
</comment>
<comment type="cofactor">
    <cofactor evidence="1">
        <name>Zn(2+)</name>
        <dbReference type="ChEBI" id="CHEBI:29105"/>
    </cofactor>
    <text evidence="1">Binds 1 zinc ion per subunit.</text>
</comment>
<comment type="pathway">
    <text evidence="1">tRNA modification; tRNA-queuosine biosynthesis.</text>
</comment>
<comment type="subunit">
    <text evidence="1">Homodimer. Within each dimer, one monomer is responsible for RNA recognition and catalysis, while the other monomer binds to the replacement base PreQ1.</text>
</comment>
<comment type="similarity">
    <text evidence="1">Belongs to the queuine tRNA-ribosyltransferase family.</text>
</comment>
<keyword id="KW-0328">Glycosyltransferase</keyword>
<keyword id="KW-0479">Metal-binding</keyword>
<keyword id="KW-0671">Queuosine biosynthesis</keyword>
<keyword id="KW-0808">Transferase</keyword>
<keyword id="KW-0819">tRNA processing</keyword>
<keyword id="KW-0862">Zinc</keyword>
<proteinExistence type="inferred from homology"/>
<feature type="chain" id="PRO_0000135539" description="Queuine tRNA-ribosyltransferase">
    <location>
        <begin position="1"/>
        <end position="380"/>
    </location>
</feature>
<feature type="region of interest" description="RNA binding" evidence="1">
    <location>
        <begin position="251"/>
        <end position="257"/>
    </location>
</feature>
<feature type="region of interest" description="RNA binding; important for wobble base 34 recognition" evidence="1">
    <location>
        <begin position="275"/>
        <end position="279"/>
    </location>
</feature>
<feature type="active site" description="Proton acceptor" evidence="1">
    <location>
        <position position="96"/>
    </location>
</feature>
<feature type="active site" description="Nucleophile" evidence="1">
    <location>
        <position position="270"/>
    </location>
</feature>
<feature type="binding site" evidence="1">
    <location>
        <begin position="96"/>
        <end position="100"/>
    </location>
    <ligand>
        <name>substrate</name>
    </ligand>
</feature>
<feature type="binding site" evidence="1">
    <location>
        <position position="150"/>
    </location>
    <ligand>
        <name>substrate</name>
    </ligand>
</feature>
<feature type="binding site" evidence="1">
    <location>
        <position position="193"/>
    </location>
    <ligand>
        <name>substrate</name>
    </ligand>
</feature>
<feature type="binding site" evidence="1">
    <location>
        <position position="220"/>
    </location>
    <ligand>
        <name>substrate</name>
    </ligand>
</feature>
<feature type="binding site" evidence="1">
    <location>
        <position position="308"/>
    </location>
    <ligand>
        <name>Zn(2+)</name>
        <dbReference type="ChEBI" id="CHEBI:29105"/>
    </ligand>
</feature>
<feature type="binding site" evidence="1">
    <location>
        <position position="310"/>
    </location>
    <ligand>
        <name>Zn(2+)</name>
        <dbReference type="ChEBI" id="CHEBI:29105"/>
    </ligand>
</feature>
<feature type="binding site" evidence="1">
    <location>
        <position position="313"/>
    </location>
    <ligand>
        <name>Zn(2+)</name>
        <dbReference type="ChEBI" id="CHEBI:29105"/>
    </ligand>
</feature>
<feature type="binding site" evidence="1">
    <location>
        <position position="339"/>
    </location>
    <ligand>
        <name>Zn(2+)</name>
        <dbReference type="ChEBI" id="CHEBI:29105"/>
    </ligand>
</feature>
<protein>
    <recommendedName>
        <fullName evidence="1">Queuine tRNA-ribosyltransferase</fullName>
        <ecNumber evidence="1">2.4.2.29</ecNumber>
    </recommendedName>
    <alternativeName>
        <fullName evidence="1">Guanine insertion enzyme</fullName>
    </alternativeName>
    <alternativeName>
        <fullName evidence="1">tRNA-guanine transglycosylase</fullName>
    </alternativeName>
</protein>
<organism>
    <name type="scientific">Streptococcus thermophilus (strain CNRZ 1066)</name>
    <dbReference type="NCBI Taxonomy" id="299768"/>
    <lineage>
        <taxon>Bacteria</taxon>
        <taxon>Bacillati</taxon>
        <taxon>Bacillota</taxon>
        <taxon>Bacilli</taxon>
        <taxon>Lactobacillales</taxon>
        <taxon>Streptococcaceae</taxon>
        <taxon>Streptococcus</taxon>
    </lineage>
</organism>
<dbReference type="EC" id="2.4.2.29" evidence="1"/>
<dbReference type="EMBL" id="CP000024">
    <property type="protein sequence ID" value="AAV63322.1"/>
    <property type="molecule type" value="Genomic_DNA"/>
</dbReference>
<dbReference type="RefSeq" id="WP_011227572.1">
    <property type="nucleotide sequence ID" value="NC_006449.1"/>
</dbReference>
<dbReference type="SMR" id="Q5LY05"/>
<dbReference type="KEGG" id="stc:str1806"/>
<dbReference type="HOGENOM" id="CLU_022060_0_1_9"/>
<dbReference type="UniPathway" id="UPA00392"/>
<dbReference type="GO" id="GO:0005829">
    <property type="term" value="C:cytosol"/>
    <property type="evidence" value="ECO:0007669"/>
    <property type="project" value="TreeGrafter"/>
</dbReference>
<dbReference type="GO" id="GO:0046872">
    <property type="term" value="F:metal ion binding"/>
    <property type="evidence" value="ECO:0007669"/>
    <property type="project" value="UniProtKB-KW"/>
</dbReference>
<dbReference type="GO" id="GO:0008479">
    <property type="term" value="F:tRNA-guanosine(34) queuine transglycosylase activity"/>
    <property type="evidence" value="ECO:0007669"/>
    <property type="project" value="UniProtKB-UniRule"/>
</dbReference>
<dbReference type="GO" id="GO:0008616">
    <property type="term" value="P:queuosine biosynthetic process"/>
    <property type="evidence" value="ECO:0007669"/>
    <property type="project" value="UniProtKB-UniRule"/>
</dbReference>
<dbReference type="GO" id="GO:0002099">
    <property type="term" value="P:tRNA wobble guanine modification"/>
    <property type="evidence" value="ECO:0007669"/>
    <property type="project" value="TreeGrafter"/>
</dbReference>
<dbReference type="GO" id="GO:0101030">
    <property type="term" value="P:tRNA-guanine transglycosylation"/>
    <property type="evidence" value="ECO:0007669"/>
    <property type="project" value="InterPro"/>
</dbReference>
<dbReference type="FunFam" id="3.20.20.105:FF:000001">
    <property type="entry name" value="Queuine tRNA-ribosyltransferase"/>
    <property type="match status" value="1"/>
</dbReference>
<dbReference type="Gene3D" id="3.20.20.105">
    <property type="entry name" value="Queuine tRNA-ribosyltransferase-like"/>
    <property type="match status" value="1"/>
</dbReference>
<dbReference type="HAMAP" id="MF_00168">
    <property type="entry name" value="Q_tRNA_Tgt"/>
    <property type="match status" value="1"/>
</dbReference>
<dbReference type="InterPro" id="IPR050076">
    <property type="entry name" value="ArchSynthase1/Queuine_TRR"/>
</dbReference>
<dbReference type="InterPro" id="IPR004803">
    <property type="entry name" value="TGT"/>
</dbReference>
<dbReference type="InterPro" id="IPR036511">
    <property type="entry name" value="TGT-like_sf"/>
</dbReference>
<dbReference type="InterPro" id="IPR002616">
    <property type="entry name" value="tRNA_ribo_trans-like"/>
</dbReference>
<dbReference type="NCBIfam" id="TIGR00430">
    <property type="entry name" value="Q_tRNA_tgt"/>
    <property type="match status" value="1"/>
</dbReference>
<dbReference type="NCBIfam" id="TIGR00449">
    <property type="entry name" value="tgt_general"/>
    <property type="match status" value="1"/>
</dbReference>
<dbReference type="PANTHER" id="PTHR46499">
    <property type="entry name" value="QUEUINE TRNA-RIBOSYLTRANSFERASE"/>
    <property type="match status" value="1"/>
</dbReference>
<dbReference type="PANTHER" id="PTHR46499:SF1">
    <property type="entry name" value="QUEUINE TRNA-RIBOSYLTRANSFERASE"/>
    <property type="match status" value="1"/>
</dbReference>
<dbReference type="Pfam" id="PF01702">
    <property type="entry name" value="TGT"/>
    <property type="match status" value="1"/>
</dbReference>
<dbReference type="SUPFAM" id="SSF51713">
    <property type="entry name" value="tRNA-guanine transglycosylase"/>
    <property type="match status" value="1"/>
</dbReference>
<name>TGT_STRT1</name>
<evidence type="ECO:0000255" key="1">
    <source>
        <dbReference type="HAMAP-Rule" id="MF_00168"/>
    </source>
</evidence>
<sequence>MIDFPIKYRLIKKEKYTGARLGEIITPHGTFPTPMFMPVGTQATVKTQSPEELQQMGSGIILANTYHLWLRPGDELIAKAGGLHKFMNWDQAILTDSGGFQVYSLAEKRDISEEGVTFKNHLNGSKMFLSPEKAISVQNNLGSDIMMSFDECPQFYQPYDYVKKSIERTSRWAERGLKAHRRPHDQGLFGIVQGAGFEDLRRQSSHDLVSMDFPGYSIGGLAVGETHEEMNAVLDFTVPLLPENKPRYLMGVGAPDSLIDGVIRGVDMYDCVLPTRIARNGTCMTSNGRLVVKNAAYAEDFSPIDPECDCYTCKNYTRAYVRHLLKADETFGIRLTSYHNLYFLVNLMARVRQAIVDDNLLEFRQDFIEKYGYNASNRNF</sequence>